<proteinExistence type="inferred from homology"/>
<dbReference type="EC" id="2.1.1.190" evidence="1"/>
<dbReference type="EMBL" id="CP000083">
    <property type="protein sequence ID" value="AAZ24507.1"/>
    <property type="molecule type" value="Genomic_DNA"/>
</dbReference>
<dbReference type="RefSeq" id="WP_011044852.1">
    <property type="nucleotide sequence ID" value="NC_003910.7"/>
</dbReference>
<dbReference type="SMR" id="Q47WQ1"/>
<dbReference type="STRING" id="167879.CPS_4116"/>
<dbReference type="KEGG" id="cps:CPS_4116"/>
<dbReference type="HOGENOM" id="CLU_014689_8_2_6"/>
<dbReference type="Proteomes" id="UP000000547">
    <property type="component" value="Chromosome"/>
</dbReference>
<dbReference type="GO" id="GO:0051539">
    <property type="term" value="F:4 iron, 4 sulfur cluster binding"/>
    <property type="evidence" value="ECO:0007669"/>
    <property type="project" value="UniProtKB-KW"/>
</dbReference>
<dbReference type="GO" id="GO:0005506">
    <property type="term" value="F:iron ion binding"/>
    <property type="evidence" value="ECO:0007669"/>
    <property type="project" value="UniProtKB-UniRule"/>
</dbReference>
<dbReference type="GO" id="GO:0003723">
    <property type="term" value="F:RNA binding"/>
    <property type="evidence" value="ECO:0007669"/>
    <property type="project" value="InterPro"/>
</dbReference>
<dbReference type="GO" id="GO:0070041">
    <property type="term" value="F:rRNA (uridine-C5-)-methyltransferase activity"/>
    <property type="evidence" value="ECO:0007669"/>
    <property type="project" value="UniProtKB-UniRule"/>
</dbReference>
<dbReference type="GO" id="GO:0070475">
    <property type="term" value="P:rRNA base methylation"/>
    <property type="evidence" value="ECO:0007669"/>
    <property type="project" value="TreeGrafter"/>
</dbReference>
<dbReference type="CDD" id="cd02440">
    <property type="entry name" value="AdoMet_MTases"/>
    <property type="match status" value="1"/>
</dbReference>
<dbReference type="FunFam" id="2.40.50.140:FF:000097">
    <property type="entry name" value="23S rRNA (uracil(1939)-C(5))-methyltransferase RlmD"/>
    <property type="match status" value="1"/>
</dbReference>
<dbReference type="Gene3D" id="2.40.50.1070">
    <property type="match status" value="1"/>
</dbReference>
<dbReference type="Gene3D" id="2.40.50.140">
    <property type="entry name" value="Nucleic acid-binding proteins"/>
    <property type="match status" value="1"/>
</dbReference>
<dbReference type="Gene3D" id="3.40.50.150">
    <property type="entry name" value="Vaccinia Virus protein VP39"/>
    <property type="match status" value="1"/>
</dbReference>
<dbReference type="HAMAP" id="MF_01010">
    <property type="entry name" value="23SrRNA_methyltr_RlmD"/>
    <property type="match status" value="1"/>
</dbReference>
<dbReference type="InterPro" id="IPR001566">
    <property type="entry name" value="23S_rRNA_MeTrfase_RlmD"/>
</dbReference>
<dbReference type="InterPro" id="IPR030390">
    <property type="entry name" value="MeTrfase_TrmA_AS"/>
</dbReference>
<dbReference type="InterPro" id="IPR012340">
    <property type="entry name" value="NA-bd_OB-fold"/>
</dbReference>
<dbReference type="InterPro" id="IPR029063">
    <property type="entry name" value="SAM-dependent_MTases_sf"/>
</dbReference>
<dbReference type="InterPro" id="IPR002792">
    <property type="entry name" value="TRAM_dom"/>
</dbReference>
<dbReference type="InterPro" id="IPR010280">
    <property type="entry name" value="U5_MeTrfase_fam"/>
</dbReference>
<dbReference type="NCBIfam" id="NF009639">
    <property type="entry name" value="PRK13168.1"/>
    <property type="match status" value="1"/>
</dbReference>
<dbReference type="NCBIfam" id="TIGR00479">
    <property type="entry name" value="rumA"/>
    <property type="match status" value="1"/>
</dbReference>
<dbReference type="PANTHER" id="PTHR11061:SF49">
    <property type="entry name" value="23S RRNA (URACIL(1939)-C(5))-METHYLTRANSFERASE RLMD"/>
    <property type="match status" value="1"/>
</dbReference>
<dbReference type="PANTHER" id="PTHR11061">
    <property type="entry name" value="RNA M5U METHYLTRANSFERASE"/>
    <property type="match status" value="1"/>
</dbReference>
<dbReference type="Pfam" id="PF01938">
    <property type="entry name" value="TRAM"/>
    <property type="match status" value="1"/>
</dbReference>
<dbReference type="Pfam" id="PF05958">
    <property type="entry name" value="tRNA_U5-meth_tr"/>
    <property type="match status" value="1"/>
</dbReference>
<dbReference type="SUPFAM" id="SSF50249">
    <property type="entry name" value="Nucleic acid-binding proteins"/>
    <property type="match status" value="1"/>
</dbReference>
<dbReference type="SUPFAM" id="SSF53335">
    <property type="entry name" value="S-adenosyl-L-methionine-dependent methyltransferases"/>
    <property type="match status" value="1"/>
</dbReference>
<dbReference type="PROSITE" id="PS51687">
    <property type="entry name" value="SAM_MT_RNA_M5U"/>
    <property type="match status" value="1"/>
</dbReference>
<dbReference type="PROSITE" id="PS50926">
    <property type="entry name" value="TRAM"/>
    <property type="match status" value="1"/>
</dbReference>
<dbReference type="PROSITE" id="PS01230">
    <property type="entry name" value="TRMA_1"/>
    <property type="match status" value="1"/>
</dbReference>
<name>RLMD_COLP3</name>
<comment type="function">
    <text evidence="1">Catalyzes the formation of 5-methyl-uridine at position 1939 (m5U1939) in 23S rRNA.</text>
</comment>
<comment type="catalytic activity">
    <reaction evidence="1">
        <text>uridine(1939) in 23S rRNA + S-adenosyl-L-methionine = 5-methyluridine(1939) in 23S rRNA + S-adenosyl-L-homocysteine + H(+)</text>
        <dbReference type="Rhea" id="RHEA:42908"/>
        <dbReference type="Rhea" id="RHEA-COMP:10278"/>
        <dbReference type="Rhea" id="RHEA-COMP:10279"/>
        <dbReference type="ChEBI" id="CHEBI:15378"/>
        <dbReference type="ChEBI" id="CHEBI:57856"/>
        <dbReference type="ChEBI" id="CHEBI:59789"/>
        <dbReference type="ChEBI" id="CHEBI:65315"/>
        <dbReference type="ChEBI" id="CHEBI:74447"/>
        <dbReference type="EC" id="2.1.1.190"/>
    </reaction>
</comment>
<comment type="similarity">
    <text evidence="1">Belongs to the class I-like SAM-binding methyltransferase superfamily. RNA M5U methyltransferase family. RlmD subfamily.</text>
</comment>
<evidence type="ECO:0000255" key="1">
    <source>
        <dbReference type="HAMAP-Rule" id="MF_01010"/>
    </source>
</evidence>
<gene>
    <name evidence="1" type="primary">rlmD</name>
    <name type="synonym">rumA</name>
    <name type="ordered locus">CPS_4116</name>
</gene>
<reference key="1">
    <citation type="journal article" date="2005" name="Proc. Natl. Acad. Sci. U.S.A.">
        <title>The psychrophilic lifestyle as revealed by the genome sequence of Colwellia psychrerythraea 34H through genomic and proteomic analyses.</title>
        <authorList>
            <person name="Methe B.A."/>
            <person name="Nelson K.E."/>
            <person name="Deming J.W."/>
            <person name="Momen B."/>
            <person name="Melamud E."/>
            <person name="Zhang X."/>
            <person name="Moult J."/>
            <person name="Madupu R."/>
            <person name="Nelson W.C."/>
            <person name="Dodson R.J."/>
            <person name="Brinkac L.M."/>
            <person name="Daugherty S.C."/>
            <person name="Durkin A.S."/>
            <person name="DeBoy R.T."/>
            <person name="Kolonay J.F."/>
            <person name="Sullivan S.A."/>
            <person name="Zhou L."/>
            <person name="Davidsen T.M."/>
            <person name="Wu M."/>
            <person name="Huston A.L."/>
            <person name="Lewis M."/>
            <person name="Weaver B."/>
            <person name="Weidman J.F."/>
            <person name="Khouri H."/>
            <person name="Utterback T.R."/>
            <person name="Feldblyum T.V."/>
            <person name="Fraser C.M."/>
        </authorList>
    </citation>
    <scope>NUCLEOTIDE SEQUENCE [LARGE SCALE GENOMIC DNA]</scope>
    <source>
        <strain>34H / ATCC BAA-681</strain>
    </source>
</reference>
<feature type="chain" id="PRO_0000282037" description="23S rRNA (uracil(1939)-C(5))-methyltransferase RlmD">
    <location>
        <begin position="1"/>
        <end position="469"/>
    </location>
</feature>
<feature type="domain" description="TRAM" evidence="1">
    <location>
        <begin position="11"/>
        <end position="69"/>
    </location>
</feature>
<feature type="active site" description="Nucleophile" evidence="1">
    <location>
        <position position="425"/>
    </location>
</feature>
<feature type="binding site" evidence="1">
    <location>
        <position position="82"/>
    </location>
    <ligand>
        <name>[4Fe-4S] cluster</name>
        <dbReference type="ChEBI" id="CHEBI:49883"/>
    </ligand>
</feature>
<feature type="binding site" evidence="1">
    <location>
        <position position="88"/>
    </location>
    <ligand>
        <name>[4Fe-4S] cluster</name>
        <dbReference type="ChEBI" id="CHEBI:49883"/>
    </ligand>
</feature>
<feature type="binding site" evidence="1">
    <location>
        <position position="91"/>
    </location>
    <ligand>
        <name>[4Fe-4S] cluster</name>
        <dbReference type="ChEBI" id="CHEBI:49883"/>
    </ligand>
</feature>
<feature type="binding site" evidence="1">
    <location>
        <position position="178"/>
    </location>
    <ligand>
        <name>[4Fe-4S] cluster</name>
        <dbReference type="ChEBI" id="CHEBI:49883"/>
    </ligand>
</feature>
<feature type="binding site" evidence="1">
    <location>
        <position position="300"/>
    </location>
    <ligand>
        <name>S-adenosyl-L-methionine</name>
        <dbReference type="ChEBI" id="CHEBI:59789"/>
    </ligand>
</feature>
<feature type="binding site" evidence="1">
    <location>
        <position position="329"/>
    </location>
    <ligand>
        <name>S-adenosyl-L-methionine</name>
        <dbReference type="ChEBI" id="CHEBI:59789"/>
    </ligand>
</feature>
<feature type="binding site" evidence="1">
    <location>
        <position position="334"/>
    </location>
    <ligand>
        <name>S-adenosyl-L-methionine</name>
        <dbReference type="ChEBI" id="CHEBI:59789"/>
    </ligand>
</feature>
<feature type="binding site" evidence="1">
    <location>
        <position position="350"/>
    </location>
    <ligand>
        <name>S-adenosyl-L-methionine</name>
        <dbReference type="ChEBI" id="CHEBI:59789"/>
    </ligand>
</feature>
<feature type="binding site" evidence="1">
    <location>
        <position position="377"/>
    </location>
    <ligand>
        <name>S-adenosyl-L-methionine</name>
        <dbReference type="ChEBI" id="CHEBI:59789"/>
    </ligand>
</feature>
<feature type="binding site" evidence="1">
    <location>
        <position position="399"/>
    </location>
    <ligand>
        <name>S-adenosyl-L-methionine</name>
        <dbReference type="ChEBI" id="CHEBI:59789"/>
    </ligand>
</feature>
<accession>Q47WQ1</accession>
<sequence>MANYFKAAVKPKTSNQRLTVTVDKLDMNGVGVARWQNKPIFIAGVLPDEIVDVKVIEQKSKYARAKLISIDKQSASRVIPQCQHFGLCGGCDLQMLALEEQLLFKQQKITDLFSRSFSTQNITPEINTAHLPWQAAIKSSPWHYRRKARIGVQFDKNAQATIGFRQKSTNQLAAIKSCPVLVEPLSAIFPLLKKLLAQLTVKSAIGHIEVIQADISDTSSADKIQKDNQVVVVVRQLKPMNDTDIGLWQLYAQRHCWHVIIDDGNKQLPLADIKGGDSFELSYELTDTSKVYFSSNDFIQINHQVNNAMISQALAWLNILATDNVLDLFCGLGNFSLALAKHAKRVVGVEGMQTMVDKATQNSLVNGLDNCQFYQADLNSHWLLEPWVQGQVFDKVLLDPARAGAEQAVSQIAELKIPCVLYVSCDPATLARDSAILVSKGYKLEKISLMDMFSQTKHVETMILFTHTS</sequence>
<keyword id="KW-0004">4Fe-4S</keyword>
<keyword id="KW-0408">Iron</keyword>
<keyword id="KW-0411">Iron-sulfur</keyword>
<keyword id="KW-0479">Metal-binding</keyword>
<keyword id="KW-0489">Methyltransferase</keyword>
<keyword id="KW-0698">rRNA processing</keyword>
<keyword id="KW-0949">S-adenosyl-L-methionine</keyword>
<keyword id="KW-0808">Transferase</keyword>
<protein>
    <recommendedName>
        <fullName evidence="1">23S rRNA (uracil(1939)-C(5))-methyltransferase RlmD</fullName>
        <ecNumber evidence="1">2.1.1.190</ecNumber>
    </recommendedName>
    <alternativeName>
        <fullName evidence="1">23S rRNA(m5U1939)-methyltransferase</fullName>
    </alternativeName>
</protein>
<organism>
    <name type="scientific">Colwellia psychrerythraea (strain 34H / ATCC BAA-681)</name>
    <name type="common">Vibrio psychroerythus</name>
    <dbReference type="NCBI Taxonomy" id="167879"/>
    <lineage>
        <taxon>Bacteria</taxon>
        <taxon>Pseudomonadati</taxon>
        <taxon>Pseudomonadota</taxon>
        <taxon>Gammaproteobacteria</taxon>
        <taxon>Alteromonadales</taxon>
        <taxon>Colwelliaceae</taxon>
        <taxon>Colwellia</taxon>
    </lineage>
</organism>